<feature type="chain" id="PRO_1000201912" description="tRNA sulfurtransferase">
    <location>
        <begin position="1"/>
        <end position="482"/>
    </location>
</feature>
<feature type="domain" description="THUMP" evidence="1">
    <location>
        <begin position="61"/>
        <end position="165"/>
    </location>
</feature>
<feature type="domain" description="Rhodanese" evidence="1">
    <location>
        <begin position="404"/>
        <end position="482"/>
    </location>
</feature>
<feature type="active site" description="Cysteine persulfide intermediate" evidence="1">
    <location>
        <position position="456"/>
    </location>
</feature>
<feature type="binding site" evidence="1">
    <location>
        <begin position="183"/>
        <end position="184"/>
    </location>
    <ligand>
        <name>ATP</name>
        <dbReference type="ChEBI" id="CHEBI:30616"/>
    </ligand>
</feature>
<feature type="binding site" evidence="1">
    <location>
        <position position="265"/>
    </location>
    <ligand>
        <name>ATP</name>
        <dbReference type="ChEBI" id="CHEBI:30616"/>
    </ligand>
</feature>
<feature type="binding site" evidence="1">
    <location>
        <position position="287"/>
    </location>
    <ligand>
        <name>ATP</name>
        <dbReference type="ChEBI" id="CHEBI:30616"/>
    </ligand>
</feature>
<feature type="binding site" evidence="1">
    <location>
        <position position="296"/>
    </location>
    <ligand>
        <name>ATP</name>
        <dbReference type="ChEBI" id="CHEBI:30616"/>
    </ligand>
</feature>
<feature type="disulfide bond" description="Redox-active" evidence="1">
    <location>
        <begin position="344"/>
        <end position="456"/>
    </location>
</feature>
<reference key="1">
    <citation type="submission" date="2009-03" db="EMBL/GenBank/DDBJ databases">
        <title>Complete genome sequence of Edwardsiella ictaluri 93-146.</title>
        <authorList>
            <person name="Williams M.L."/>
            <person name="Gillaspy A.F."/>
            <person name="Dyer D.W."/>
            <person name="Thune R.L."/>
            <person name="Waldbieser G.C."/>
            <person name="Schuster S.C."/>
            <person name="Gipson J."/>
            <person name="Zaitshik J."/>
            <person name="Landry C."/>
            <person name="Lawrence M.L."/>
        </authorList>
    </citation>
    <scope>NUCLEOTIDE SEQUENCE [LARGE SCALE GENOMIC DNA]</scope>
    <source>
        <strain>93-146</strain>
    </source>
</reference>
<proteinExistence type="inferred from homology"/>
<accession>C5BCI2</accession>
<protein>
    <recommendedName>
        <fullName evidence="1">tRNA sulfurtransferase</fullName>
        <ecNumber evidence="1">2.8.1.4</ecNumber>
    </recommendedName>
    <alternativeName>
        <fullName evidence="1">Sulfur carrier protein ThiS sulfurtransferase</fullName>
    </alternativeName>
    <alternativeName>
        <fullName evidence="1">Thiamine biosynthesis protein ThiI</fullName>
    </alternativeName>
    <alternativeName>
        <fullName evidence="1">tRNA 4-thiouridine synthase</fullName>
    </alternativeName>
</protein>
<name>THII_EDWI9</name>
<organism>
    <name type="scientific">Edwardsiella ictaluri (strain 93-146)</name>
    <dbReference type="NCBI Taxonomy" id="634503"/>
    <lineage>
        <taxon>Bacteria</taxon>
        <taxon>Pseudomonadati</taxon>
        <taxon>Pseudomonadota</taxon>
        <taxon>Gammaproteobacteria</taxon>
        <taxon>Enterobacterales</taxon>
        <taxon>Hafniaceae</taxon>
        <taxon>Edwardsiella</taxon>
    </lineage>
</organism>
<sequence length="482" mass="54871">MKFIIKLFPEITIKSQSVRLRFIKILTGNIRNVLKPLVEDVAVTRHWDHIEVRAKEESRRDLVRDALTRIPGIHHILEVEDHPYTDMHDIFEQTLAMYREQLEEKTFCVRVKRRGKHTFTSIEVERYVGGGLNQNIPSARVRLNHPEVTVNLEIEDDRLLLVRGRFEGQGGYPIGTQEDVLSLISGGFDSGVSSYMLMRRGCRVHYCFFNLGGSAHEIGVKQVAHYLWNRFGSSHRVRFVAIDFAPVVGEILEKVDDGQMGVVLKRMMVRAASRVAERYGIQALVTGEALGQVSSQTLTNLRLIDGVSDTLVLRPLIAHDKEHIIRLARNIGTEDFAKTMPEFCGVISKSPTVKAVKARIEAEEEHFDFAILDRVVDEAQTMDIRDIARQSEADVVEVETIESLAEGDVVLDIRAPDEQEAKPLQLADSEVICLPFYKLANAFGDLDQVRRYVLYCDRGVMSRLQALYLREQGYDNVRVYRP</sequence>
<comment type="function">
    <text evidence="1">Catalyzes the ATP-dependent transfer of a sulfur to tRNA to produce 4-thiouridine in position 8 of tRNAs, which functions as a near-UV photosensor. Also catalyzes the transfer of sulfur to the sulfur carrier protein ThiS, forming ThiS-thiocarboxylate. This is a step in the synthesis of thiazole, in the thiamine biosynthesis pathway. The sulfur is donated as persulfide by IscS.</text>
</comment>
<comment type="catalytic activity">
    <reaction evidence="1">
        <text>[ThiI sulfur-carrier protein]-S-sulfanyl-L-cysteine + a uridine in tRNA + 2 reduced [2Fe-2S]-[ferredoxin] + ATP + H(+) = [ThiI sulfur-carrier protein]-L-cysteine + a 4-thiouridine in tRNA + 2 oxidized [2Fe-2S]-[ferredoxin] + AMP + diphosphate</text>
        <dbReference type="Rhea" id="RHEA:24176"/>
        <dbReference type="Rhea" id="RHEA-COMP:10000"/>
        <dbReference type="Rhea" id="RHEA-COMP:10001"/>
        <dbReference type="Rhea" id="RHEA-COMP:13337"/>
        <dbReference type="Rhea" id="RHEA-COMP:13338"/>
        <dbReference type="Rhea" id="RHEA-COMP:13339"/>
        <dbReference type="Rhea" id="RHEA-COMP:13340"/>
        <dbReference type="ChEBI" id="CHEBI:15378"/>
        <dbReference type="ChEBI" id="CHEBI:29950"/>
        <dbReference type="ChEBI" id="CHEBI:30616"/>
        <dbReference type="ChEBI" id="CHEBI:33019"/>
        <dbReference type="ChEBI" id="CHEBI:33737"/>
        <dbReference type="ChEBI" id="CHEBI:33738"/>
        <dbReference type="ChEBI" id="CHEBI:61963"/>
        <dbReference type="ChEBI" id="CHEBI:65315"/>
        <dbReference type="ChEBI" id="CHEBI:136798"/>
        <dbReference type="ChEBI" id="CHEBI:456215"/>
        <dbReference type="EC" id="2.8.1.4"/>
    </reaction>
</comment>
<comment type="catalytic activity">
    <reaction evidence="1">
        <text>[ThiS sulfur-carrier protein]-C-terminal Gly-Gly-AMP + S-sulfanyl-L-cysteinyl-[cysteine desulfurase] + AH2 = [ThiS sulfur-carrier protein]-C-terminal-Gly-aminoethanethioate + L-cysteinyl-[cysteine desulfurase] + A + AMP + 2 H(+)</text>
        <dbReference type="Rhea" id="RHEA:43340"/>
        <dbReference type="Rhea" id="RHEA-COMP:12157"/>
        <dbReference type="Rhea" id="RHEA-COMP:12158"/>
        <dbReference type="Rhea" id="RHEA-COMP:12910"/>
        <dbReference type="Rhea" id="RHEA-COMP:19908"/>
        <dbReference type="ChEBI" id="CHEBI:13193"/>
        <dbReference type="ChEBI" id="CHEBI:15378"/>
        <dbReference type="ChEBI" id="CHEBI:17499"/>
        <dbReference type="ChEBI" id="CHEBI:29950"/>
        <dbReference type="ChEBI" id="CHEBI:61963"/>
        <dbReference type="ChEBI" id="CHEBI:90618"/>
        <dbReference type="ChEBI" id="CHEBI:232372"/>
        <dbReference type="ChEBI" id="CHEBI:456215"/>
    </reaction>
</comment>
<comment type="pathway">
    <text evidence="1">Cofactor biosynthesis; thiamine diphosphate biosynthesis.</text>
</comment>
<comment type="subcellular location">
    <subcellularLocation>
        <location evidence="1">Cytoplasm</location>
    </subcellularLocation>
</comment>
<comment type="similarity">
    <text evidence="1">Belongs to the ThiI family.</text>
</comment>
<evidence type="ECO:0000255" key="1">
    <source>
        <dbReference type="HAMAP-Rule" id="MF_00021"/>
    </source>
</evidence>
<keyword id="KW-0067">ATP-binding</keyword>
<keyword id="KW-0963">Cytoplasm</keyword>
<keyword id="KW-1015">Disulfide bond</keyword>
<keyword id="KW-0547">Nucleotide-binding</keyword>
<keyword id="KW-0676">Redox-active center</keyword>
<keyword id="KW-0694">RNA-binding</keyword>
<keyword id="KW-0784">Thiamine biosynthesis</keyword>
<keyword id="KW-0808">Transferase</keyword>
<keyword id="KW-0820">tRNA-binding</keyword>
<gene>
    <name evidence="1" type="primary">thiI</name>
    <name type="ordered locus">NT01EI_1065</name>
</gene>
<dbReference type="EC" id="2.8.1.4" evidence="1"/>
<dbReference type="EMBL" id="CP001600">
    <property type="protein sequence ID" value="ACR68277.1"/>
    <property type="molecule type" value="Genomic_DNA"/>
</dbReference>
<dbReference type="RefSeq" id="WP_015870457.1">
    <property type="nucleotide sequence ID" value="NZ_CP169062.1"/>
</dbReference>
<dbReference type="SMR" id="C5BCI2"/>
<dbReference type="STRING" id="67780.B6E78_15690"/>
<dbReference type="GeneID" id="69538098"/>
<dbReference type="KEGG" id="eic:NT01EI_1065"/>
<dbReference type="PATRIC" id="fig|634503.3.peg.964"/>
<dbReference type="HOGENOM" id="CLU_037952_4_1_6"/>
<dbReference type="OrthoDB" id="9773948at2"/>
<dbReference type="UniPathway" id="UPA00060"/>
<dbReference type="Proteomes" id="UP000001485">
    <property type="component" value="Chromosome"/>
</dbReference>
<dbReference type="GO" id="GO:0005829">
    <property type="term" value="C:cytosol"/>
    <property type="evidence" value="ECO:0007669"/>
    <property type="project" value="TreeGrafter"/>
</dbReference>
<dbReference type="GO" id="GO:0005524">
    <property type="term" value="F:ATP binding"/>
    <property type="evidence" value="ECO:0007669"/>
    <property type="project" value="UniProtKB-UniRule"/>
</dbReference>
<dbReference type="GO" id="GO:0004810">
    <property type="term" value="F:CCA tRNA nucleotidyltransferase activity"/>
    <property type="evidence" value="ECO:0007669"/>
    <property type="project" value="InterPro"/>
</dbReference>
<dbReference type="GO" id="GO:0000049">
    <property type="term" value="F:tRNA binding"/>
    <property type="evidence" value="ECO:0007669"/>
    <property type="project" value="UniProtKB-UniRule"/>
</dbReference>
<dbReference type="GO" id="GO:0140741">
    <property type="term" value="F:tRNA-uracil-4 sulfurtransferase activity"/>
    <property type="evidence" value="ECO:0007669"/>
    <property type="project" value="UniProtKB-EC"/>
</dbReference>
<dbReference type="GO" id="GO:0009228">
    <property type="term" value="P:thiamine biosynthetic process"/>
    <property type="evidence" value="ECO:0007669"/>
    <property type="project" value="UniProtKB-KW"/>
</dbReference>
<dbReference type="GO" id="GO:0009229">
    <property type="term" value="P:thiamine diphosphate biosynthetic process"/>
    <property type="evidence" value="ECO:0007669"/>
    <property type="project" value="UniProtKB-UniRule"/>
</dbReference>
<dbReference type="GO" id="GO:0052837">
    <property type="term" value="P:thiazole biosynthetic process"/>
    <property type="evidence" value="ECO:0007669"/>
    <property type="project" value="InterPro"/>
</dbReference>
<dbReference type="GO" id="GO:0002937">
    <property type="term" value="P:tRNA 4-thiouridine biosynthesis"/>
    <property type="evidence" value="ECO:0007669"/>
    <property type="project" value="TreeGrafter"/>
</dbReference>
<dbReference type="CDD" id="cd01712">
    <property type="entry name" value="PPase_ThiI"/>
    <property type="match status" value="1"/>
</dbReference>
<dbReference type="CDD" id="cd00158">
    <property type="entry name" value="RHOD"/>
    <property type="match status" value="1"/>
</dbReference>
<dbReference type="CDD" id="cd11716">
    <property type="entry name" value="THUMP_ThiI"/>
    <property type="match status" value="1"/>
</dbReference>
<dbReference type="FunFam" id="3.30.2130.30:FF:000002">
    <property type="entry name" value="tRNA sulfurtransferase"/>
    <property type="match status" value="1"/>
</dbReference>
<dbReference type="FunFam" id="3.40.50.620:FF:000029">
    <property type="entry name" value="tRNA sulfurtransferase"/>
    <property type="match status" value="1"/>
</dbReference>
<dbReference type="Gene3D" id="3.30.2130.30">
    <property type="match status" value="1"/>
</dbReference>
<dbReference type="Gene3D" id="3.40.50.620">
    <property type="entry name" value="HUPs"/>
    <property type="match status" value="1"/>
</dbReference>
<dbReference type="Gene3D" id="3.40.250.10">
    <property type="entry name" value="Rhodanese-like domain"/>
    <property type="match status" value="1"/>
</dbReference>
<dbReference type="HAMAP" id="MF_00021">
    <property type="entry name" value="ThiI"/>
    <property type="match status" value="1"/>
</dbReference>
<dbReference type="InterPro" id="IPR001763">
    <property type="entry name" value="Rhodanese-like_dom"/>
</dbReference>
<dbReference type="InterPro" id="IPR036873">
    <property type="entry name" value="Rhodanese-like_dom_sf"/>
</dbReference>
<dbReference type="InterPro" id="IPR014729">
    <property type="entry name" value="Rossmann-like_a/b/a_fold"/>
</dbReference>
<dbReference type="InterPro" id="IPR020536">
    <property type="entry name" value="ThiI_AANH"/>
</dbReference>
<dbReference type="InterPro" id="IPR054173">
    <property type="entry name" value="ThiI_fer"/>
</dbReference>
<dbReference type="InterPro" id="IPR049961">
    <property type="entry name" value="ThiI_N"/>
</dbReference>
<dbReference type="InterPro" id="IPR026340">
    <property type="entry name" value="THII_Thiazole_biosynth_dom"/>
</dbReference>
<dbReference type="InterPro" id="IPR004114">
    <property type="entry name" value="THUMP_dom"/>
</dbReference>
<dbReference type="InterPro" id="IPR049962">
    <property type="entry name" value="THUMP_ThiI"/>
</dbReference>
<dbReference type="InterPro" id="IPR003720">
    <property type="entry name" value="tRNA_STrfase"/>
</dbReference>
<dbReference type="InterPro" id="IPR050102">
    <property type="entry name" value="tRNA_sulfurtransferase_ThiI"/>
</dbReference>
<dbReference type="NCBIfam" id="TIGR04271">
    <property type="entry name" value="ThiI_C_thiazole"/>
    <property type="match status" value="1"/>
</dbReference>
<dbReference type="NCBIfam" id="TIGR00342">
    <property type="entry name" value="tRNA uracil 4-sulfurtransferase ThiI"/>
    <property type="match status" value="1"/>
</dbReference>
<dbReference type="PANTHER" id="PTHR43209">
    <property type="entry name" value="TRNA SULFURTRANSFERASE"/>
    <property type="match status" value="1"/>
</dbReference>
<dbReference type="PANTHER" id="PTHR43209:SF1">
    <property type="entry name" value="TRNA SULFURTRANSFERASE"/>
    <property type="match status" value="1"/>
</dbReference>
<dbReference type="Pfam" id="PF02568">
    <property type="entry name" value="ThiI"/>
    <property type="match status" value="1"/>
</dbReference>
<dbReference type="Pfam" id="PF22025">
    <property type="entry name" value="ThiI_fer"/>
    <property type="match status" value="1"/>
</dbReference>
<dbReference type="Pfam" id="PF02926">
    <property type="entry name" value="THUMP"/>
    <property type="match status" value="1"/>
</dbReference>
<dbReference type="SMART" id="SM00981">
    <property type="entry name" value="THUMP"/>
    <property type="match status" value="1"/>
</dbReference>
<dbReference type="SUPFAM" id="SSF52402">
    <property type="entry name" value="Adenine nucleotide alpha hydrolases-like"/>
    <property type="match status" value="1"/>
</dbReference>
<dbReference type="SUPFAM" id="SSF52821">
    <property type="entry name" value="Rhodanese/Cell cycle control phosphatase"/>
    <property type="match status" value="1"/>
</dbReference>
<dbReference type="SUPFAM" id="SSF143437">
    <property type="entry name" value="THUMP domain-like"/>
    <property type="match status" value="1"/>
</dbReference>
<dbReference type="PROSITE" id="PS50206">
    <property type="entry name" value="RHODANESE_3"/>
    <property type="match status" value="1"/>
</dbReference>
<dbReference type="PROSITE" id="PS51165">
    <property type="entry name" value="THUMP"/>
    <property type="match status" value="1"/>
</dbReference>